<dbReference type="EC" id="6.5.1.3" evidence="1"/>
<dbReference type="EMBL" id="AK032226">
    <property type="protein sequence ID" value="BAC27770.1"/>
    <property type="molecule type" value="mRNA"/>
</dbReference>
<dbReference type="EMBL" id="AK036647">
    <property type="protein sequence ID" value="BAE43296.1"/>
    <property type="molecule type" value="mRNA"/>
</dbReference>
<dbReference type="EMBL" id="AK078231">
    <property type="protein sequence ID" value="BAC37184.1"/>
    <property type="molecule type" value="mRNA"/>
</dbReference>
<dbReference type="EMBL" id="AK082894">
    <property type="protein sequence ID" value="BAC38673.1"/>
    <property type="molecule type" value="mRNA"/>
</dbReference>
<dbReference type="EMBL" id="BC082587">
    <property type="protein sequence ID" value="AAH82587.1"/>
    <property type="molecule type" value="mRNA"/>
</dbReference>
<dbReference type="CCDS" id="CCDS24151.1">
    <molecule id="Q8BHN7-1"/>
</dbReference>
<dbReference type="RefSeq" id="NP_780337.2">
    <molecule id="Q8BHN7-1"/>
    <property type="nucleotide sequence ID" value="NM_175128.2"/>
</dbReference>
<dbReference type="SMR" id="Q8BHN7"/>
<dbReference type="FunCoup" id="Q8BHN7">
    <property type="interactions" value="87"/>
</dbReference>
<dbReference type="STRING" id="10090.ENSMUSP00000062410"/>
<dbReference type="iPTMnet" id="Q8BHN7"/>
<dbReference type="PhosphoSitePlus" id="Q8BHN7"/>
<dbReference type="PaxDb" id="10090-ENSMUSP00000062410"/>
<dbReference type="PeptideAtlas" id="Q8BHN7"/>
<dbReference type="Pumba" id="Q8BHN7"/>
<dbReference type="Antibodypedia" id="52241">
    <property type="antibodies" value="112 antibodies from 22 providers"/>
</dbReference>
<dbReference type="Ensembl" id="ENSMUST00000054471.10">
    <molecule id="Q8BHN7-1"/>
    <property type="protein sequence ID" value="ENSMUSP00000062410.9"/>
    <property type="gene ID" value="ENSMUSG00000046567.11"/>
</dbReference>
<dbReference type="GeneID" id="68281"/>
<dbReference type="KEGG" id="mmu:68281"/>
<dbReference type="UCSC" id="uc007gxx.2">
    <molecule id="Q8BHN7-1"/>
    <property type="organism name" value="mouse"/>
</dbReference>
<dbReference type="UCSC" id="uc007gxy.2">
    <molecule id="Q8BHN7-2"/>
    <property type="organism name" value="mouse"/>
</dbReference>
<dbReference type="AGR" id="MGI:1921197"/>
<dbReference type="CTD" id="91298"/>
<dbReference type="MGI" id="MGI:1921197">
    <property type="gene designation" value="Rlig1"/>
</dbReference>
<dbReference type="VEuPathDB" id="HostDB:ENSMUSG00000046567"/>
<dbReference type="eggNOG" id="ENOG502QWBV">
    <property type="taxonomic scope" value="Eukaryota"/>
</dbReference>
<dbReference type="GeneTree" id="ENSGT00500000044938"/>
<dbReference type="HOGENOM" id="CLU_074918_0_0_1"/>
<dbReference type="InParanoid" id="Q8BHN7"/>
<dbReference type="OMA" id="KQFMYSA"/>
<dbReference type="OrthoDB" id="6021187at2759"/>
<dbReference type="PhylomeDB" id="Q8BHN7"/>
<dbReference type="TreeFam" id="TF328501"/>
<dbReference type="BioGRID-ORCS" id="68281">
    <property type="hits" value="1 hit in 77 CRISPR screens"/>
</dbReference>
<dbReference type="PRO" id="PR:Q8BHN7"/>
<dbReference type="Proteomes" id="UP000000589">
    <property type="component" value="Chromosome 10"/>
</dbReference>
<dbReference type="RNAct" id="Q8BHN7">
    <property type="molecule type" value="protein"/>
</dbReference>
<dbReference type="Bgee" id="ENSMUSG00000046567">
    <property type="expression patterns" value="Expressed in spermatocyte and 243 other cell types or tissues"/>
</dbReference>
<dbReference type="ExpressionAtlas" id="Q8BHN7">
    <property type="expression patterns" value="baseline and differential"/>
</dbReference>
<dbReference type="GO" id="GO:0005524">
    <property type="term" value="F:ATP binding"/>
    <property type="evidence" value="ECO:0007669"/>
    <property type="project" value="UniProtKB-KW"/>
</dbReference>
<dbReference type="GO" id="GO:0003972">
    <property type="term" value="F:RNA ligase (ATP) activity"/>
    <property type="evidence" value="ECO:0007669"/>
    <property type="project" value="Ensembl"/>
</dbReference>
<dbReference type="GO" id="GO:0002244">
    <property type="term" value="P:hematopoietic progenitor cell differentiation"/>
    <property type="evidence" value="ECO:0000316"/>
    <property type="project" value="MGI"/>
</dbReference>
<dbReference type="GO" id="GO:0000302">
    <property type="term" value="P:response to reactive oxygen species"/>
    <property type="evidence" value="ECO:0007669"/>
    <property type="project" value="Ensembl"/>
</dbReference>
<dbReference type="GO" id="GO:0042245">
    <property type="term" value="P:RNA repair"/>
    <property type="evidence" value="ECO:0007669"/>
    <property type="project" value="UniProtKB-KW"/>
</dbReference>
<dbReference type="InterPro" id="IPR041211">
    <property type="entry name" value="RLIG1"/>
</dbReference>
<dbReference type="PANTHER" id="PTHR31219">
    <property type="entry name" value="CHROMOSOME 28 C12ORF29 HOMOLOG"/>
    <property type="match status" value="1"/>
</dbReference>
<dbReference type="PANTHER" id="PTHR31219:SF2">
    <property type="entry name" value="RNA LIGASE 1"/>
    <property type="match status" value="1"/>
</dbReference>
<dbReference type="Pfam" id="PF17720">
    <property type="entry name" value="RLIG1"/>
    <property type="match status" value="1"/>
</dbReference>
<name>RLIG1_MOUSE</name>
<proteinExistence type="evidence at transcript level"/>
<evidence type="ECO:0000250" key="1">
    <source>
        <dbReference type="UniProtKB" id="Q8N999"/>
    </source>
</evidence>
<evidence type="ECO:0000303" key="2">
    <source>
    </source>
</evidence>
<evidence type="ECO:0000305" key="3"/>
<evidence type="ECO:0000312" key="4">
    <source>
        <dbReference type="MGI" id="MGI:1921197"/>
    </source>
</evidence>
<sequence>MKRLGSVQRKMPCVFVTEVKAEPSAKREHQPFKVLATETLSEKALDADVYNAVATEKVDGTCCYVTNYKGQPYLWARLDRKPNKQADKRFKKFLHSKESAKEFHWNTEEDFKPVPECWIPAKEIEKQNGKPVPDENGHIPGWVPVEKGSKQYCWHSSVVNYEFGIALVLRHHPDDPGVLEISAVPLSELLEQTLELIGTSINGNPYGLGSKKSPLHFLTPHGAFQVRNLPTLKHNDLLSWFEDCREGQIEGIVWHCGDGCLIKVHRHHLGLCWPLPDTYMNSKPVIINMNLNLNNYDCAFDNQSLFNQFSKIDKQKFERLKDIILDV</sequence>
<reference key="1">
    <citation type="journal article" date="2005" name="Science">
        <title>The transcriptional landscape of the mammalian genome.</title>
        <authorList>
            <person name="Carninci P."/>
            <person name="Kasukawa T."/>
            <person name="Katayama S."/>
            <person name="Gough J."/>
            <person name="Frith M.C."/>
            <person name="Maeda N."/>
            <person name="Oyama R."/>
            <person name="Ravasi T."/>
            <person name="Lenhard B."/>
            <person name="Wells C."/>
            <person name="Kodzius R."/>
            <person name="Shimokawa K."/>
            <person name="Bajic V.B."/>
            <person name="Brenner S.E."/>
            <person name="Batalov S."/>
            <person name="Forrest A.R."/>
            <person name="Zavolan M."/>
            <person name="Davis M.J."/>
            <person name="Wilming L.G."/>
            <person name="Aidinis V."/>
            <person name="Allen J.E."/>
            <person name="Ambesi-Impiombato A."/>
            <person name="Apweiler R."/>
            <person name="Aturaliya R.N."/>
            <person name="Bailey T.L."/>
            <person name="Bansal M."/>
            <person name="Baxter L."/>
            <person name="Beisel K.W."/>
            <person name="Bersano T."/>
            <person name="Bono H."/>
            <person name="Chalk A.M."/>
            <person name="Chiu K.P."/>
            <person name="Choudhary V."/>
            <person name="Christoffels A."/>
            <person name="Clutterbuck D.R."/>
            <person name="Crowe M.L."/>
            <person name="Dalla E."/>
            <person name="Dalrymple B.P."/>
            <person name="de Bono B."/>
            <person name="Della Gatta G."/>
            <person name="di Bernardo D."/>
            <person name="Down T."/>
            <person name="Engstrom P."/>
            <person name="Fagiolini M."/>
            <person name="Faulkner G."/>
            <person name="Fletcher C.F."/>
            <person name="Fukushima T."/>
            <person name="Furuno M."/>
            <person name="Futaki S."/>
            <person name="Gariboldi M."/>
            <person name="Georgii-Hemming P."/>
            <person name="Gingeras T.R."/>
            <person name="Gojobori T."/>
            <person name="Green R.E."/>
            <person name="Gustincich S."/>
            <person name="Harbers M."/>
            <person name="Hayashi Y."/>
            <person name="Hensch T.K."/>
            <person name="Hirokawa N."/>
            <person name="Hill D."/>
            <person name="Huminiecki L."/>
            <person name="Iacono M."/>
            <person name="Ikeo K."/>
            <person name="Iwama A."/>
            <person name="Ishikawa T."/>
            <person name="Jakt M."/>
            <person name="Kanapin A."/>
            <person name="Katoh M."/>
            <person name="Kawasawa Y."/>
            <person name="Kelso J."/>
            <person name="Kitamura H."/>
            <person name="Kitano H."/>
            <person name="Kollias G."/>
            <person name="Krishnan S.P."/>
            <person name="Kruger A."/>
            <person name="Kummerfeld S.K."/>
            <person name="Kurochkin I.V."/>
            <person name="Lareau L.F."/>
            <person name="Lazarevic D."/>
            <person name="Lipovich L."/>
            <person name="Liu J."/>
            <person name="Liuni S."/>
            <person name="McWilliam S."/>
            <person name="Madan Babu M."/>
            <person name="Madera M."/>
            <person name="Marchionni L."/>
            <person name="Matsuda H."/>
            <person name="Matsuzawa S."/>
            <person name="Miki H."/>
            <person name="Mignone F."/>
            <person name="Miyake S."/>
            <person name="Morris K."/>
            <person name="Mottagui-Tabar S."/>
            <person name="Mulder N."/>
            <person name="Nakano N."/>
            <person name="Nakauchi H."/>
            <person name="Ng P."/>
            <person name="Nilsson R."/>
            <person name="Nishiguchi S."/>
            <person name="Nishikawa S."/>
            <person name="Nori F."/>
            <person name="Ohara O."/>
            <person name="Okazaki Y."/>
            <person name="Orlando V."/>
            <person name="Pang K.C."/>
            <person name="Pavan W.J."/>
            <person name="Pavesi G."/>
            <person name="Pesole G."/>
            <person name="Petrovsky N."/>
            <person name="Piazza S."/>
            <person name="Reed J."/>
            <person name="Reid J.F."/>
            <person name="Ring B.Z."/>
            <person name="Ringwald M."/>
            <person name="Rost B."/>
            <person name="Ruan Y."/>
            <person name="Salzberg S.L."/>
            <person name="Sandelin A."/>
            <person name="Schneider C."/>
            <person name="Schoenbach C."/>
            <person name="Sekiguchi K."/>
            <person name="Semple C.A."/>
            <person name="Seno S."/>
            <person name="Sessa L."/>
            <person name="Sheng Y."/>
            <person name="Shibata Y."/>
            <person name="Shimada H."/>
            <person name="Shimada K."/>
            <person name="Silva D."/>
            <person name="Sinclair B."/>
            <person name="Sperling S."/>
            <person name="Stupka E."/>
            <person name="Sugiura K."/>
            <person name="Sultana R."/>
            <person name="Takenaka Y."/>
            <person name="Taki K."/>
            <person name="Tammoja K."/>
            <person name="Tan S.L."/>
            <person name="Tang S."/>
            <person name="Taylor M.S."/>
            <person name="Tegner J."/>
            <person name="Teichmann S.A."/>
            <person name="Ueda H.R."/>
            <person name="van Nimwegen E."/>
            <person name="Verardo R."/>
            <person name="Wei C.L."/>
            <person name="Yagi K."/>
            <person name="Yamanishi H."/>
            <person name="Zabarovsky E."/>
            <person name="Zhu S."/>
            <person name="Zimmer A."/>
            <person name="Hide W."/>
            <person name="Bult C."/>
            <person name="Grimmond S.M."/>
            <person name="Teasdale R.D."/>
            <person name="Liu E.T."/>
            <person name="Brusic V."/>
            <person name="Quackenbush J."/>
            <person name="Wahlestedt C."/>
            <person name="Mattick J.S."/>
            <person name="Hume D.A."/>
            <person name="Kai C."/>
            <person name="Sasaki D."/>
            <person name="Tomaru Y."/>
            <person name="Fukuda S."/>
            <person name="Kanamori-Katayama M."/>
            <person name="Suzuki M."/>
            <person name="Aoki J."/>
            <person name="Arakawa T."/>
            <person name="Iida J."/>
            <person name="Imamura K."/>
            <person name="Itoh M."/>
            <person name="Kato T."/>
            <person name="Kawaji H."/>
            <person name="Kawagashira N."/>
            <person name="Kawashima T."/>
            <person name="Kojima M."/>
            <person name="Kondo S."/>
            <person name="Konno H."/>
            <person name="Nakano K."/>
            <person name="Ninomiya N."/>
            <person name="Nishio T."/>
            <person name="Okada M."/>
            <person name="Plessy C."/>
            <person name="Shibata K."/>
            <person name="Shiraki T."/>
            <person name="Suzuki S."/>
            <person name="Tagami M."/>
            <person name="Waki K."/>
            <person name="Watahiki A."/>
            <person name="Okamura-Oho Y."/>
            <person name="Suzuki H."/>
            <person name="Kawai J."/>
            <person name="Hayashizaki Y."/>
        </authorList>
    </citation>
    <scope>NUCLEOTIDE SEQUENCE [LARGE SCALE MRNA] (ISOFORMS 1 AND 2)</scope>
    <source>
        <strain>C57BL/6J</strain>
        <tissue>Bone</tissue>
        <tissue>Brain</tissue>
        <tissue>Embryo</tissue>
    </source>
</reference>
<reference key="2">
    <citation type="journal article" date="2004" name="Genome Res.">
        <title>The status, quality, and expansion of the NIH full-length cDNA project: the Mammalian Gene Collection (MGC).</title>
        <authorList>
            <consortium name="The MGC Project Team"/>
        </authorList>
    </citation>
    <scope>NUCLEOTIDE SEQUENCE [LARGE SCALE MRNA] (ISOFORM 1)</scope>
    <source>
        <strain>C57BL/6J</strain>
        <tissue>Brain</tissue>
    </source>
</reference>
<keyword id="KW-0025">Alternative splicing</keyword>
<keyword id="KW-0067">ATP-binding</keyword>
<keyword id="KW-0436">Ligase</keyword>
<keyword id="KW-0547">Nucleotide-binding</keyword>
<keyword id="KW-1185">Reference proteome</keyword>
<keyword id="KW-0692">RNA repair</keyword>
<gene>
    <name evidence="4" type="primary">Rlig1</name>
</gene>
<protein>
    <recommendedName>
        <fullName evidence="3">RNA ligase 1</fullName>
        <ecNumber evidence="1">6.5.1.3</ecNumber>
    </recommendedName>
    <alternativeName>
        <fullName>RNA ligase</fullName>
        <shortName>Rnl</shortName>
    </alternativeName>
</protein>
<comment type="function">
    <text evidence="1">Functions as an RNA ligase, in vitro. The ligation reaction entails three nucleotidyl transfer steps. In the first step, the RNA ligase reacts with ATP in the absence of nucleic acid to form a covalent ligase-AMP intermediate and release pyrophosphate. In step 2, the ligase-AMP binds to the nucleic acid and transfers the adenylate to the 5'-PO4 terminus to form an adenylylated intermediate. In step 3, the RNA ligase directs the attack of the 3'-OH on the 5'-phosphoanhydride linkage, resulting in a repaired 3'-5' phosphodiester and release of AMP. Exhibits selectivity for single-stranded RNA substrates and may not have nick-sealing activity on double-stranded DNA-RNA hybrids. May play a role in maintaining RNA integrity under stress conditions, for example in response to reactive oxygen species (ROS).</text>
</comment>
<comment type="catalytic activity">
    <molecule>RNA ligase 1</molecule>
    <reaction evidence="1">
        <text>ATP + (ribonucleotide)n-3'-hydroxyl + 5'-phospho-(ribonucleotide)m = (ribonucleotide)n+m + AMP + diphosphate.</text>
        <dbReference type="EC" id="6.5.1.3"/>
    </reaction>
</comment>
<comment type="cofactor">
    <cofactor evidence="1">
        <name>Mg(2+)</name>
        <dbReference type="ChEBI" id="CHEBI:18420"/>
    </cofactor>
    <cofactor evidence="1">
        <name>Mn(2+)</name>
        <dbReference type="ChEBI" id="CHEBI:29035"/>
    </cofactor>
</comment>
<comment type="alternative products">
    <event type="alternative splicing"/>
    <isoform>
        <id>Q8BHN7-1</id>
        <name>1</name>
        <sequence type="displayed"/>
    </isoform>
    <isoform>
        <id>Q8BHN7-2</id>
        <name>2</name>
        <sequence type="described" ref="VSP_028320 VSP_028321"/>
    </isoform>
</comment>
<comment type="PTM">
    <text evidence="1">AMPylates itself (auto-AMPylation).</text>
</comment>
<accession>Q8BHN7</accession>
<accession>Q8BHP8</accession>
<accession>Q8BHV9</accession>
<feature type="chain" id="PRO_0000305273" description="RNA ligase 1">
    <location>
        <begin position="1"/>
        <end position="327"/>
    </location>
</feature>
<feature type="splice variant" id="VSP_028320" description="In isoform 2." evidence="2">
    <original>HRHHLGLCW</original>
    <variation>MTRNNLSLF</variation>
    <location>
        <begin position="265"/>
        <end position="273"/>
    </location>
</feature>
<feature type="splice variant" id="VSP_028321" description="In isoform 2." evidence="2">
    <location>
        <begin position="274"/>
        <end position="327"/>
    </location>
</feature>
<feature type="sequence conflict" description="In Ref. 1; BAC27770." evidence="3" ref="1">
    <original>F</original>
    <variation>L</variation>
    <location>
        <position position="224"/>
    </location>
</feature>
<organism>
    <name type="scientific">Mus musculus</name>
    <name type="common">Mouse</name>
    <dbReference type="NCBI Taxonomy" id="10090"/>
    <lineage>
        <taxon>Eukaryota</taxon>
        <taxon>Metazoa</taxon>
        <taxon>Chordata</taxon>
        <taxon>Craniata</taxon>
        <taxon>Vertebrata</taxon>
        <taxon>Euteleostomi</taxon>
        <taxon>Mammalia</taxon>
        <taxon>Eutheria</taxon>
        <taxon>Euarchontoglires</taxon>
        <taxon>Glires</taxon>
        <taxon>Rodentia</taxon>
        <taxon>Myomorpha</taxon>
        <taxon>Muroidea</taxon>
        <taxon>Muridae</taxon>
        <taxon>Murinae</taxon>
        <taxon>Mus</taxon>
        <taxon>Mus</taxon>
    </lineage>
</organism>